<feature type="chain" id="PRO_1000065585" description="Replication initiation control protein YabA">
    <location>
        <begin position="1"/>
        <end position="108"/>
    </location>
</feature>
<feature type="binding site" evidence="1">
    <location>
        <position position="82"/>
    </location>
    <ligand>
        <name>Zn(2+)</name>
        <dbReference type="ChEBI" id="CHEBI:29105"/>
    </ligand>
</feature>
<feature type="binding site" evidence="1">
    <location>
        <position position="84"/>
    </location>
    <ligand>
        <name>Zn(2+)</name>
        <dbReference type="ChEBI" id="CHEBI:29105"/>
    </ligand>
</feature>
<feature type="binding site" evidence="1">
    <location>
        <position position="98"/>
    </location>
    <ligand>
        <name>Zn(2+)</name>
        <dbReference type="ChEBI" id="CHEBI:29105"/>
    </ligand>
</feature>
<feature type="binding site" evidence="1">
    <location>
        <position position="101"/>
    </location>
    <ligand>
        <name>Zn(2+)</name>
        <dbReference type="ChEBI" id="CHEBI:29105"/>
    </ligand>
</feature>
<gene>
    <name evidence="1" type="primary">yabA</name>
    <name type="ordered locus">SAK_1589</name>
</gene>
<evidence type="ECO:0000255" key="1">
    <source>
        <dbReference type="HAMAP-Rule" id="MF_01159"/>
    </source>
</evidence>
<reference key="1">
    <citation type="journal article" date="2005" name="Proc. Natl. Acad. Sci. U.S.A.">
        <title>Genome analysis of multiple pathogenic isolates of Streptococcus agalactiae: implications for the microbial 'pan-genome'.</title>
        <authorList>
            <person name="Tettelin H."/>
            <person name="Masignani V."/>
            <person name="Cieslewicz M.J."/>
            <person name="Donati C."/>
            <person name="Medini D."/>
            <person name="Ward N.L."/>
            <person name="Angiuoli S.V."/>
            <person name="Crabtree J."/>
            <person name="Jones A.L."/>
            <person name="Durkin A.S."/>
            <person name="DeBoy R.T."/>
            <person name="Davidsen T.M."/>
            <person name="Mora M."/>
            <person name="Scarselli M."/>
            <person name="Margarit y Ros I."/>
            <person name="Peterson J.D."/>
            <person name="Hauser C.R."/>
            <person name="Sundaram J.P."/>
            <person name="Nelson W.C."/>
            <person name="Madupu R."/>
            <person name="Brinkac L.M."/>
            <person name="Dodson R.J."/>
            <person name="Rosovitz M.J."/>
            <person name="Sullivan S.A."/>
            <person name="Daugherty S.C."/>
            <person name="Haft D.H."/>
            <person name="Selengut J."/>
            <person name="Gwinn M.L."/>
            <person name="Zhou L."/>
            <person name="Zafar N."/>
            <person name="Khouri H."/>
            <person name="Radune D."/>
            <person name="Dimitrov G."/>
            <person name="Watkins K."/>
            <person name="O'Connor K.J."/>
            <person name="Smith S."/>
            <person name="Utterback T.R."/>
            <person name="White O."/>
            <person name="Rubens C.E."/>
            <person name="Grandi G."/>
            <person name="Madoff L.C."/>
            <person name="Kasper D.L."/>
            <person name="Telford J.L."/>
            <person name="Wessels M.R."/>
            <person name="Rappuoli R."/>
            <person name="Fraser C.M."/>
        </authorList>
    </citation>
    <scope>NUCLEOTIDE SEQUENCE [LARGE SCALE GENOMIC DNA]</scope>
    <source>
        <strain>ATCC 27591 / A909 / CDC SS700</strain>
    </source>
</reference>
<sequence>MDKKDLFDAFDDFSQNLLVGLSEIETMKKQIQKLLEENTVLRIENGKLRERLSVIEAETETAVKNSKQGRELLEGIYNDGFHICNTFYGQRRENDEECAFCIELLYRD</sequence>
<comment type="function">
    <text evidence="1">Involved in control of chromosome replication initiation. Inhibits the cooperative binding of DnaA to the oriC region, thus negatively regulating initiation of chromosome replication. Inhibits the ability of DnaA-ATP to form a helix on DNA; does not disassemble preformed DnaA-DNA helices. Decreases the residence time of DnaA on the chromosome at its binding sites (oriC, replication forks and promoter-binding sites). Tethers DnaA to the replication machinery via the DNA polymerase beta sliding clamp subunit (dnaN). Associates with oriC and other DnaA targets on the chromosome in a DnaA-dependent manner.</text>
</comment>
<comment type="cofactor">
    <cofactor evidence="1">
        <name>Zn(2+)</name>
        <dbReference type="ChEBI" id="CHEBI:29105"/>
    </cofactor>
    <text evidence="1">Binds 1 zinc ion per subunit.</text>
</comment>
<comment type="subunit">
    <text evidence="1">Homotetramer. Interacts with both DnaA and DnaN, acting as a bridge between these two proteins.</text>
</comment>
<comment type="subcellular location">
    <subcellularLocation>
        <location evidence="1">Cytoplasm</location>
        <location evidence="1">Nucleoid</location>
    </subcellularLocation>
    <text evidence="1">Localizes in tight foci, which correspond to the replisome at mid-cell throughout the cell cycle.</text>
</comment>
<comment type="similarity">
    <text evidence="1">Belongs to the YabA family.</text>
</comment>
<protein>
    <recommendedName>
        <fullName evidence="1">Replication initiation control protein YabA</fullName>
    </recommendedName>
</protein>
<organism>
    <name type="scientific">Streptococcus agalactiae serotype Ia (strain ATCC 27591 / A909 / CDC SS700)</name>
    <dbReference type="NCBI Taxonomy" id="205921"/>
    <lineage>
        <taxon>Bacteria</taxon>
        <taxon>Bacillati</taxon>
        <taxon>Bacillota</taxon>
        <taxon>Bacilli</taxon>
        <taxon>Lactobacillales</taxon>
        <taxon>Streptococcaceae</taxon>
        <taxon>Streptococcus</taxon>
    </lineage>
</organism>
<name>YABA_STRA1</name>
<keyword id="KW-0963">Cytoplasm</keyword>
<keyword id="KW-0235">DNA replication</keyword>
<keyword id="KW-0236">DNA replication inhibitor</keyword>
<keyword id="KW-0479">Metal-binding</keyword>
<keyword id="KW-0862">Zinc</keyword>
<dbReference type="EMBL" id="CP000114">
    <property type="protein sequence ID" value="ABA46270.1"/>
    <property type="molecule type" value="Genomic_DNA"/>
</dbReference>
<dbReference type="RefSeq" id="WP_000358198.1">
    <property type="nucleotide sequence ID" value="NC_007432.1"/>
</dbReference>
<dbReference type="SMR" id="Q3JZW0"/>
<dbReference type="GeneID" id="66886420"/>
<dbReference type="KEGG" id="sak:SAK_1589"/>
<dbReference type="HOGENOM" id="CLU_157169_0_0_9"/>
<dbReference type="GO" id="GO:0009295">
    <property type="term" value="C:nucleoid"/>
    <property type="evidence" value="ECO:0007669"/>
    <property type="project" value="UniProtKB-SubCell"/>
</dbReference>
<dbReference type="GO" id="GO:0006260">
    <property type="term" value="P:DNA replication"/>
    <property type="evidence" value="ECO:0007669"/>
    <property type="project" value="UniProtKB-UniRule"/>
</dbReference>
<dbReference type="HAMAP" id="MF_01159">
    <property type="entry name" value="YabA"/>
    <property type="match status" value="1"/>
</dbReference>
<dbReference type="InterPro" id="IPR010377">
    <property type="entry name" value="YabA"/>
</dbReference>
<dbReference type="NCBIfam" id="NF009640">
    <property type="entry name" value="PRK13169.1-1"/>
    <property type="match status" value="1"/>
</dbReference>
<dbReference type="Pfam" id="PF06156">
    <property type="entry name" value="YabA"/>
    <property type="match status" value="1"/>
</dbReference>
<dbReference type="PIRSF" id="PIRSF021439">
    <property type="entry name" value="DUF972"/>
    <property type="match status" value="1"/>
</dbReference>
<proteinExistence type="inferred from homology"/>
<accession>Q3JZW0</accession>